<feature type="chain" id="PRO_1000071589" description="tRNA pseudouridine synthase A">
    <location>
        <begin position="1"/>
        <end position="264"/>
    </location>
</feature>
<feature type="active site" description="Nucleophile" evidence="1">
    <location>
        <position position="51"/>
    </location>
</feature>
<feature type="binding site" evidence="1">
    <location>
        <position position="109"/>
    </location>
    <ligand>
        <name>substrate</name>
    </ligand>
</feature>
<sequence length="264" mass="30144">MKIALGVEYNGKRYFGWQRQEKVLSVQEELEKALSFVANEKIDLFCAGRTDSGVHGTGQVVHFETEVVRPERAWAFGTNANLPDDIAVKWAKTADDEFHARFSATARRYRYLIYTNPLRSAVLPEGVTHCHLPLDHEKMHEAGQFLLGENDFSSFRAAQCQSKTPWRNVHHLQVTRHGRYIVVDIQANAFVHHMVRNIVGSLMEVGSGRQPVEWMKWLLEQRNRKLAAPTAKPQGLYLVRVTYPERFGIPLSPLGPLFLPDELV</sequence>
<gene>
    <name evidence="1" type="primary">truA</name>
    <name type="ordered locus">Asuc_1711</name>
</gene>
<name>TRUA_ACTSZ</name>
<accession>A6VQ16</accession>
<protein>
    <recommendedName>
        <fullName evidence="1">tRNA pseudouridine synthase A</fullName>
        <ecNumber evidence="1">5.4.99.12</ecNumber>
    </recommendedName>
    <alternativeName>
        <fullName evidence="1">tRNA pseudouridine(38-40) synthase</fullName>
    </alternativeName>
    <alternativeName>
        <fullName evidence="1">tRNA pseudouridylate synthase I</fullName>
    </alternativeName>
    <alternativeName>
        <fullName evidence="1">tRNA-uridine isomerase I</fullName>
    </alternativeName>
</protein>
<proteinExistence type="inferred from homology"/>
<dbReference type="EC" id="5.4.99.12" evidence="1"/>
<dbReference type="EMBL" id="CP000746">
    <property type="protein sequence ID" value="ABR75063.1"/>
    <property type="molecule type" value="Genomic_DNA"/>
</dbReference>
<dbReference type="RefSeq" id="WP_012073440.1">
    <property type="nucleotide sequence ID" value="NC_009655.1"/>
</dbReference>
<dbReference type="SMR" id="A6VQ16"/>
<dbReference type="STRING" id="339671.Asuc_1711"/>
<dbReference type="KEGG" id="asu:Asuc_1711"/>
<dbReference type="eggNOG" id="COG0101">
    <property type="taxonomic scope" value="Bacteria"/>
</dbReference>
<dbReference type="HOGENOM" id="CLU_014673_0_2_6"/>
<dbReference type="OrthoDB" id="9811823at2"/>
<dbReference type="Proteomes" id="UP000001114">
    <property type="component" value="Chromosome"/>
</dbReference>
<dbReference type="GO" id="GO:0003723">
    <property type="term" value="F:RNA binding"/>
    <property type="evidence" value="ECO:0007669"/>
    <property type="project" value="InterPro"/>
</dbReference>
<dbReference type="GO" id="GO:0160147">
    <property type="term" value="F:tRNA pseudouridine(38-40) synthase activity"/>
    <property type="evidence" value="ECO:0007669"/>
    <property type="project" value="UniProtKB-EC"/>
</dbReference>
<dbReference type="GO" id="GO:0031119">
    <property type="term" value="P:tRNA pseudouridine synthesis"/>
    <property type="evidence" value="ECO:0007669"/>
    <property type="project" value="UniProtKB-UniRule"/>
</dbReference>
<dbReference type="CDD" id="cd02570">
    <property type="entry name" value="PseudoU_synth_EcTruA"/>
    <property type="match status" value="1"/>
</dbReference>
<dbReference type="FunFam" id="3.30.70.580:FF:000001">
    <property type="entry name" value="tRNA pseudouridine synthase A"/>
    <property type="match status" value="1"/>
</dbReference>
<dbReference type="FunFam" id="3.30.70.660:FF:000001">
    <property type="entry name" value="tRNA pseudouridine synthase A"/>
    <property type="match status" value="1"/>
</dbReference>
<dbReference type="Gene3D" id="3.30.70.660">
    <property type="entry name" value="Pseudouridine synthase I, catalytic domain, C-terminal subdomain"/>
    <property type="match status" value="1"/>
</dbReference>
<dbReference type="Gene3D" id="3.30.70.580">
    <property type="entry name" value="Pseudouridine synthase I, catalytic domain, N-terminal subdomain"/>
    <property type="match status" value="1"/>
</dbReference>
<dbReference type="HAMAP" id="MF_00171">
    <property type="entry name" value="TruA"/>
    <property type="match status" value="1"/>
</dbReference>
<dbReference type="InterPro" id="IPR020103">
    <property type="entry name" value="PsdUridine_synth_cat_dom_sf"/>
</dbReference>
<dbReference type="InterPro" id="IPR001406">
    <property type="entry name" value="PsdUridine_synth_TruA"/>
</dbReference>
<dbReference type="InterPro" id="IPR020097">
    <property type="entry name" value="PsdUridine_synth_TruA_a/b_dom"/>
</dbReference>
<dbReference type="InterPro" id="IPR020095">
    <property type="entry name" value="PsdUridine_synth_TruA_C"/>
</dbReference>
<dbReference type="InterPro" id="IPR020094">
    <property type="entry name" value="TruA/RsuA/RluB/E/F_N"/>
</dbReference>
<dbReference type="NCBIfam" id="TIGR00071">
    <property type="entry name" value="hisT_truA"/>
    <property type="match status" value="1"/>
</dbReference>
<dbReference type="PANTHER" id="PTHR11142">
    <property type="entry name" value="PSEUDOURIDYLATE SYNTHASE"/>
    <property type="match status" value="1"/>
</dbReference>
<dbReference type="PANTHER" id="PTHR11142:SF0">
    <property type="entry name" value="TRNA PSEUDOURIDINE SYNTHASE-LIKE 1"/>
    <property type="match status" value="1"/>
</dbReference>
<dbReference type="Pfam" id="PF01416">
    <property type="entry name" value="PseudoU_synth_1"/>
    <property type="match status" value="2"/>
</dbReference>
<dbReference type="PIRSF" id="PIRSF001430">
    <property type="entry name" value="tRNA_psdUrid_synth"/>
    <property type="match status" value="1"/>
</dbReference>
<dbReference type="SUPFAM" id="SSF55120">
    <property type="entry name" value="Pseudouridine synthase"/>
    <property type="match status" value="1"/>
</dbReference>
<reference key="1">
    <citation type="journal article" date="2010" name="BMC Genomics">
        <title>A genomic perspective on the potential of Actinobacillus succinogenes for industrial succinate production.</title>
        <authorList>
            <person name="McKinlay J.B."/>
            <person name="Laivenieks M."/>
            <person name="Schindler B.D."/>
            <person name="McKinlay A.A."/>
            <person name="Siddaramappa S."/>
            <person name="Challacombe J.F."/>
            <person name="Lowry S.R."/>
            <person name="Clum A."/>
            <person name="Lapidus A.L."/>
            <person name="Burkhart K.B."/>
            <person name="Harkins V."/>
            <person name="Vieille C."/>
        </authorList>
    </citation>
    <scope>NUCLEOTIDE SEQUENCE [LARGE SCALE GENOMIC DNA]</scope>
    <source>
        <strain>ATCC 55618 / DSM 22257 / CCUG 43843 / 130Z</strain>
    </source>
</reference>
<organism>
    <name type="scientific">Actinobacillus succinogenes (strain ATCC 55618 / DSM 22257 / CCUG 43843 / 130Z)</name>
    <dbReference type="NCBI Taxonomy" id="339671"/>
    <lineage>
        <taxon>Bacteria</taxon>
        <taxon>Pseudomonadati</taxon>
        <taxon>Pseudomonadota</taxon>
        <taxon>Gammaproteobacteria</taxon>
        <taxon>Pasteurellales</taxon>
        <taxon>Pasteurellaceae</taxon>
        <taxon>Actinobacillus</taxon>
    </lineage>
</organism>
<evidence type="ECO:0000255" key="1">
    <source>
        <dbReference type="HAMAP-Rule" id="MF_00171"/>
    </source>
</evidence>
<keyword id="KW-0413">Isomerase</keyword>
<keyword id="KW-1185">Reference proteome</keyword>
<keyword id="KW-0819">tRNA processing</keyword>
<comment type="function">
    <text evidence="1">Formation of pseudouridine at positions 38, 39 and 40 in the anticodon stem and loop of transfer RNAs.</text>
</comment>
<comment type="catalytic activity">
    <reaction evidence="1">
        <text>uridine(38/39/40) in tRNA = pseudouridine(38/39/40) in tRNA</text>
        <dbReference type="Rhea" id="RHEA:22376"/>
        <dbReference type="Rhea" id="RHEA-COMP:10085"/>
        <dbReference type="Rhea" id="RHEA-COMP:10087"/>
        <dbReference type="ChEBI" id="CHEBI:65314"/>
        <dbReference type="ChEBI" id="CHEBI:65315"/>
        <dbReference type="EC" id="5.4.99.12"/>
    </reaction>
</comment>
<comment type="subunit">
    <text evidence="1">Homodimer.</text>
</comment>
<comment type="similarity">
    <text evidence="1">Belongs to the tRNA pseudouridine synthase TruA family.</text>
</comment>